<gene>
    <name evidence="1" type="primary">upp</name>
    <name type="ordered locus">E2348C_2723</name>
</gene>
<keyword id="KW-0021">Allosteric enzyme</keyword>
<keyword id="KW-0328">Glycosyltransferase</keyword>
<keyword id="KW-0342">GTP-binding</keyword>
<keyword id="KW-0460">Magnesium</keyword>
<keyword id="KW-0547">Nucleotide-binding</keyword>
<keyword id="KW-1185">Reference proteome</keyword>
<keyword id="KW-0808">Transferase</keyword>
<protein>
    <recommendedName>
        <fullName evidence="1">Uracil phosphoribosyltransferase</fullName>
        <ecNumber evidence="1">2.4.2.9</ecNumber>
    </recommendedName>
    <alternativeName>
        <fullName evidence="1">UMP pyrophosphorylase</fullName>
    </alternativeName>
    <alternativeName>
        <fullName evidence="1">UPRTase</fullName>
    </alternativeName>
</protein>
<reference key="1">
    <citation type="journal article" date="2009" name="J. Bacteriol.">
        <title>Complete genome sequence and comparative genome analysis of enteropathogenic Escherichia coli O127:H6 strain E2348/69.</title>
        <authorList>
            <person name="Iguchi A."/>
            <person name="Thomson N.R."/>
            <person name="Ogura Y."/>
            <person name="Saunders D."/>
            <person name="Ooka T."/>
            <person name="Henderson I.R."/>
            <person name="Harris D."/>
            <person name="Asadulghani M."/>
            <person name="Kurokawa K."/>
            <person name="Dean P."/>
            <person name="Kenny B."/>
            <person name="Quail M.A."/>
            <person name="Thurston S."/>
            <person name="Dougan G."/>
            <person name="Hayashi T."/>
            <person name="Parkhill J."/>
            <person name="Frankel G."/>
        </authorList>
    </citation>
    <scope>NUCLEOTIDE SEQUENCE [LARGE SCALE GENOMIC DNA]</scope>
    <source>
        <strain>E2348/69 / EPEC</strain>
    </source>
</reference>
<comment type="function">
    <text evidence="1">Catalyzes the conversion of uracil and 5-phospho-alpha-D-ribose 1-diphosphate (PRPP) to UMP and diphosphate.</text>
</comment>
<comment type="catalytic activity">
    <reaction evidence="1">
        <text>UMP + diphosphate = 5-phospho-alpha-D-ribose 1-diphosphate + uracil</text>
        <dbReference type="Rhea" id="RHEA:13017"/>
        <dbReference type="ChEBI" id="CHEBI:17568"/>
        <dbReference type="ChEBI" id="CHEBI:33019"/>
        <dbReference type="ChEBI" id="CHEBI:57865"/>
        <dbReference type="ChEBI" id="CHEBI:58017"/>
        <dbReference type="EC" id="2.4.2.9"/>
    </reaction>
</comment>
<comment type="cofactor">
    <cofactor evidence="1">
        <name>Mg(2+)</name>
        <dbReference type="ChEBI" id="CHEBI:18420"/>
    </cofactor>
    <text evidence="1">Binds 1 Mg(2+) ion per subunit. The magnesium is bound as Mg-PRPP.</text>
</comment>
<comment type="activity regulation">
    <text evidence="1">Allosterically activated by GTP.</text>
</comment>
<comment type="pathway">
    <text evidence="1">Pyrimidine metabolism; UMP biosynthesis via salvage pathway; UMP from uracil: step 1/1.</text>
</comment>
<comment type="similarity">
    <text evidence="1">Belongs to the UPRTase family.</text>
</comment>
<accession>B7UGN6</accession>
<organism>
    <name type="scientific">Escherichia coli O127:H6 (strain E2348/69 / EPEC)</name>
    <dbReference type="NCBI Taxonomy" id="574521"/>
    <lineage>
        <taxon>Bacteria</taxon>
        <taxon>Pseudomonadati</taxon>
        <taxon>Pseudomonadota</taxon>
        <taxon>Gammaproteobacteria</taxon>
        <taxon>Enterobacterales</taxon>
        <taxon>Enterobacteriaceae</taxon>
        <taxon>Escherichia</taxon>
    </lineage>
</organism>
<dbReference type="EC" id="2.4.2.9" evidence="1"/>
<dbReference type="EMBL" id="FM180568">
    <property type="protein sequence ID" value="CAS10271.1"/>
    <property type="molecule type" value="Genomic_DNA"/>
</dbReference>
<dbReference type="RefSeq" id="WP_001295473.1">
    <property type="nucleotide sequence ID" value="NC_011601.1"/>
</dbReference>
<dbReference type="SMR" id="B7UGN6"/>
<dbReference type="GeneID" id="93774638"/>
<dbReference type="KEGG" id="ecg:E2348C_2723"/>
<dbReference type="HOGENOM" id="CLU_067096_2_2_6"/>
<dbReference type="UniPathway" id="UPA00574">
    <property type="reaction ID" value="UER00636"/>
</dbReference>
<dbReference type="Proteomes" id="UP000008205">
    <property type="component" value="Chromosome"/>
</dbReference>
<dbReference type="GO" id="GO:0005525">
    <property type="term" value="F:GTP binding"/>
    <property type="evidence" value="ECO:0007669"/>
    <property type="project" value="UniProtKB-KW"/>
</dbReference>
<dbReference type="GO" id="GO:0000287">
    <property type="term" value="F:magnesium ion binding"/>
    <property type="evidence" value="ECO:0007669"/>
    <property type="project" value="UniProtKB-UniRule"/>
</dbReference>
<dbReference type="GO" id="GO:0004845">
    <property type="term" value="F:uracil phosphoribosyltransferase activity"/>
    <property type="evidence" value="ECO:0007669"/>
    <property type="project" value="UniProtKB-UniRule"/>
</dbReference>
<dbReference type="GO" id="GO:0044206">
    <property type="term" value="P:UMP salvage"/>
    <property type="evidence" value="ECO:0007669"/>
    <property type="project" value="UniProtKB-UniRule"/>
</dbReference>
<dbReference type="GO" id="GO:0006223">
    <property type="term" value="P:uracil salvage"/>
    <property type="evidence" value="ECO:0007669"/>
    <property type="project" value="InterPro"/>
</dbReference>
<dbReference type="CDD" id="cd06223">
    <property type="entry name" value="PRTases_typeI"/>
    <property type="match status" value="1"/>
</dbReference>
<dbReference type="FunFam" id="3.40.50.2020:FF:000003">
    <property type="entry name" value="Uracil phosphoribosyltransferase"/>
    <property type="match status" value="1"/>
</dbReference>
<dbReference type="Gene3D" id="3.40.50.2020">
    <property type="match status" value="1"/>
</dbReference>
<dbReference type="HAMAP" id="MF_01218_B">
    <property type="entry name" value="Upp_B"/>
    <property type="match status" value="1"/>
</dbReference>
<dbReference type="InterPro" id="IPR000836">
    <property type="entry name" value="PRibTrfase_dom"/>
</dbReference>
<dbReference type="InterPro" id="IPR029057">
    <property type="entry name" value="PRTase-like"/>
</dbReference>
<dbReference type="InterPro" id="IPR034332">
    <property type="entry name" value="Upp_B"/>
</dbReference>
<dbReference type="InterPro" id="IPR050054">
    <property type="entry name" value="UPRTase/APRTase"/>
</dbReference>
<dbReference type="InterPro" id="IPR005765">
    <property type="entry name" value="Ura_phspho_trans"/>
</dbReference>
<dbReference type="NCBIfam" id="NF001097">
    <property type="entry name" value="PRK00129.1"/>
    <property type="match status" value="1"/>
</dbReference>
<dbReference type="NCBIfam" id="TIGR01091">
    <property type="entry name" value="upp"/>
    <property type="match status" value="1"/>
</dbReference>
<dbReference type="PANTHER" id="PTHR32315">
    <property type="entry name" value="ADENINE PHOSPHORIBOSYLTRANSFERASE"/>
    <property type="match status" value="1"/>
</dbReference>
<dbReference type="PANTHER" id="PTHR32315:SF4">
    <property type="entry name" value="URACIL PHOSPHORIBOSYLTRANSFERASE, CHLOROPLASTIC"/>
    <property type="match status" value="1"/>
</dbReference>
<dbReference type="Pfam" id="PF14681">
    <property type="entry name" value="UPRTase"/>
    <property type="match status" value="1"/>
</dbReference>
<dbReference type="SUPFAM" id="SSF53271">
    <property type="entry name" value="PRTase-like"/>
    <property type="match status" value="1"/>
</dbReference>
<proteinExistence type="inferred from homology"/>
<sequence>MKIVEVKHPLVKHKLGLMREQDISTKRFRELASEVGSLLTYEATADLETEKVTIEGWNGPVEIDQIKGKKITVVPILRAGLGMMDGVLENVPSARISVVGMYRNEETLEPVPYFQKLVSNIDERMALIVDPMLATGGSVIATIDLLKKAGCSSIKVLVLVAAPEGIAALEKAHPDVELYTASIDQGLNEHGYIIPGLGDAGDKIFGTK</sequence>
<feature type="chain" id="PRO_1000164823" description="Uracil phosphoribosyltransferase">
    <location>
        <begin position="1"/>
        <end position="208"/>
    </location>
</feature>
<feature type="binding site" evidence="1">
    <location>
        <position position="78"/>
    </location>
    <ligand>
        <name>5-phospho-alpha-D-ribose 1-diphosphate</name>
        <dbReference type="ChEBI" id="CHEBI:58017"/>
    </ligand>
</feature>
<feature type="binding site" evidence="1">
    <location>
        <position position="103"/>
    </location>
    <ligand>
        <name>5-phospho-alpha-D-ribose 1-diphosphate</name>
        <dbReference type="ChEBI" id="CHEBI:58017"/>
    </ligand>
</feature>
<feature type="binding site" evidence="1">
    <location>
        <begin position="130"/>
        <end position="138"/>
    </location>
    <ligand>
        <name>5-phospho-alpha-D-ribose 1-diphosphate</name>
        <dbReference type="ChEBI" id="CHEBI:58017"/>
    </ligand>
</feature>
<feature type="binding site" evidence="1">
    <location>
        <position position="193"/>
    </location>
    <ligand>
        <name>uracil</name>
        <dbReference type="ChEBI" id="CHEBI:17568"/>
    </ligand>
</feature>
<feature type="binding site" evidence="1">
    <location>
        <begin position="198"/>
        <end position="200"/>
    </location>
    <ligand>
        <name>uracil</name>
        <dbReference type="ChEBI" id="CHEBI:17568"/>
    </ligand>
</feature>
<feature type="binding site" evidence="1">
    <location>
        <position position="199"/>
    </location>
    <ligand>
        <name>5-phospho-alpha-D-ribose 1-diphosphate</name>
        <dbReference type="ChEBI" id="CHEBI:58017"/>
    </ligand>
</feature>
<evidence type="ECO:0000255" key="1">
    <source>
        <dbReference type="HAMAP-Rule" id="MF_01218"/>
    </source>
</evidence>
<name>UPP_ECO27</name>